<accession>Q9H013</accession>
<accession>Q9BZL5</accession>
<accession>Q9UHP2</accession>
<comment type="function">
    <text evidence="1">Participates in the proteolytic processing of beta-type neuregulin isoforms which are involved in neurogenesis and synaptogenesis, suggesting a regulatory role in glial cell. Also cleaves alpha-2 macroglobulin. May be involved in osteoblast differentiation and/or osteoblast activity in bone (By similarity).</text>
</comment>
<comment type="cofactor">
    <cofactor evidence="1">
        <name>Zn(2+)</name>
        <dbReference type="ChEBI" id="CHEBI:29105"/>
    </cofactor>
    <text evidence="1">Binds 1 zinc ion per subunit.</text>
</comment>
<comment type="subunit">
    <text evidence="9">Interacts with SH3PXD2A.</text>
</comment>
<comment type="interaction">
    <interactant intactId="EBI-8567699">
        <id>Q9H013</id>
    </interactant>
    <interactant intactId="EBI-7487998">
        <id>Q8TE68</id>
        <label>EPS8L1</label>
    </interactant>
    <organismsDiffer>false</organismsDiffer>
    <experiments>2</experiments>
</comment>
<comment type="interaction">
    <interactant intactId="EBI-8567699">
        <id>Q9H013</id>
    </interactant>
    <interactant intactId="EBI-2483234">
        <id>Q5TCZ1</id>
        <label>SH3PXD2A</label>
    </interactant>
    <organismsDiffer>false</organismsDiffer>
    <experiments>2</experiments>
</comment>
<comment type="interaction">
    <interactant intactId="EBI-8567699">
        <id>Q9H013</id>
    </interactant>
    <interactant intactId="EBI-5915931">
        <id>O95153</id>
        <label>TSPOAP1</label>
    </interactant>
    <organismsDiffer>false</organismsDiffer>
    <experiments>2</experiments>
</comment>
<comment type="subcellular location">
    <subcellularLocation>
        <location>Membrane</location>
        <topology>Single-pass type I membrane protein</topology>
    </subcellularLocation>
</comment>
<comment type="alternative products">
    <event type="alternative splicing"/>
    <isoform>
        <id>Q9H013-1</id>
        <name>A</name>
        <sequence type="displayed"/>
    </isoform>
    <isoform>
        <id>Q9H013-2</id>
        <name>B</name>
        <sequence type="described" ref="VSP_005481"/>
    </isoform>
</comment>
<comment type="tissue specificity">
    <text>Expressed in many normal organ tissues and several cancer cell lines.</text>
</comment>
<comment type="induction">
    <text>By 1,25(OH)2VD3 in monocytes.</text>
</comment>
<comment type="domain">
    <text>The conserved cysteine present in the cysteine-switch motif binds the catalytic zinc ion, thus inhibiting the enzyme. The dissociation of the cysteine from the zinc ion upon the activation-peptide release activates the enzyme.</text>
</comment>
<comment type="PTM">
    <text evidence="1">The precursor is cleaved by a furin endopeptidase.</text>
</comment>
<sequence>MPGGAGAARLCLLAFALQPLRPRAAREPGWTRGSEEGSPKLQHELIIPQWKTSESPVREKHPLKAELRVMAEGRELILDLEKNEQLFAPSYTETHYTSSGNPQTTTRKLEDHCFYHGTVRETELSSVTLSTCRGIRGLITVSSNLSYVIEPLPDSKGQHLIYRSEHLKPPPGNCGFEHSKPTTRDWALQFTQQTKKRPRRMKREDLNSMKYVELYLVADYLEFQKNRRDQDATKHKLIEIANYVDKFYRSLNIRIALVGLEVWTHGNMCEVSENPYSTLWSFLSWRRKLLAQKYHDNAQLITGMSFHGTTIGLAPLMAMCSVYQSGGVNMDHSENAIGVAATMAHEMGHNFGMTHDSADCCSASAADGGCIMAAATGHPFPKVFNGCNRRELDRYLQSGGGMCLSNMPDTRMLYGGRRCGNGYLEDGEECDCGEEEECNNPCCNASNCTLRPGAECAHGSCCHQCKLLAPGTLCREQARQCDLPEFCTGKSPHCPTNFYQMDGTPCEGGQAYCYNGMCLTYQEQCQQLWGPGARPAPDLCFEKVNVAGDTFGNCGKDMNGEHRKCNMRDAKCGKIQCQSSEARPLESNAVPIDTTIIMNGRQIQCRGTHVYRGPEEEGDMLDPGLVMTGTKCGYNHICFEGQCRNTSFFETEGCGKKCNGHGVCNNNQNCHCLPGWAPPFCNTPGHGGSIDSGPMPPESVGPVVAGVLVAILVLAVLMLMYYCCRQNNKLGQLKPSALPSKLRQQFSCPFRVSQNSGTGHANPTFKLQTPQGKRKVINTPEILRKPSQPPPRPPPDYLRGGSPPAPLPAHLSRAARNSPGPGSQIERTESSRRPPPSRPIPPAPNCIVSQDFSRPRPPQKALPANPVPGRRSLPRPGGASPLRPPGAGPQQSRPLAALAPKVSPREALKVKAGTRGLQGGRCRVEKTKQFMLLVVWTELPEQKPRAKHSCFLVPA</sequence>
<evidence type="ECO:0000250" key="1"/>
<evidence type="ECO:0000255" key="2"/>
<evidence type="ECO:0000255" key="3">
    <source>
        <dbReference type="PROSITE-ProRule" id="PRU00068"/>
    </source>
</evidence>
<evidence type="ECO:0000255" key="4">
    <source>
        <dbReference type="PROSITE-ProRule" id="PRU00076"/>
    </source>
</evidence>
<evidence type="ECO:0000255" key="5">
    <source>
        <dbReference type="PROSITE-ProRule" id="PRU00276"/>
    </source>
</evidence>
<evidence type="ECO:0000255" key="6">
    <source>
        <dbReference type="PROSITE-ProRule" id="PRU10095"/>
    </source>
</evidence>
<evidence type="ECO:0000256" key="7">
    <source>
        <dbReference type="SAM" id="MobiDB-lite"/>
    </source>
</evidence>
<evidence type="ECO:0000269" key="8">
    <source>
    </source>
</evidence>
<evidence type="ECO:0000269" key="9">
    <source>
    </source>
</evidence>
<evidence type="ECO:0000269" key="10">
    <source>
    </source>
</evidence>
<evidence type="ECO:0000269" key="11">
    <source>
    </source>
</evidence>
<evidence type="ECO:0000303" key="12">
    <source>
    </source>
</evidence>
<evidence type="ECO:0000303" key="13">
    <source>
    </source>
</evidence>
<evidence type="ECO:0000305" key="14"/>
<organism>
    <name type="scientific">Homo sapiens</name>
    <name type="common">Human</name>
    <dbReference type="NCBI Taxonomy" id="9606"/>
    <lineage>
        <taxon>Eukaryota</taxon>
        <taxon>Metazoa</taxon>
        <taxon>Chordata</taxon>
        <taxon>Craniata</taxon>
        <taxon>Vertebrata</taxon>
        <taxon>Euteleostomi</taxon>
        <taxon>Mammalia</taxon>
        <taxon>Eutheria</taxon>
        <taxon>Euarchontoglires</taxon>
        <taxon>Primates</taxon>
        <taxon>Haplorrhini</taxon>
        <taxon>Catarrhini</taxon>
        <taxon>Hominidae</taxon>
        <taxon>Homo</taxon>
    </lineage>
</organism>
<reference key="1">
    <citation type="submission" date="2000-12" db="EMBL/GenBank/DDBJ databases">
        <title>Identification of FKSG34, a novel human gene encoding for metalloprotease-disintegrin meltrin beta.</title>
        <authorList>
            <person name="Wang Y.-G."/>
            <person name="Gong L."/>
        </authorList>
    </citation>
    <scope>NUCLEOTIDE SEQUENCE [MRNA] (ISOFORM A)</scope>
</reference>
<reference key="2">
    <citation type="journal article" date="2000" name="Blood">
        <title>Molecular cloning and characterization of a human metalloprotease disintegrin a novel marker for dendritic cell differentiation.</title>
        <authorList>
            <person name="Fritsche J."/>
            <person name="Moser M."/>
            <person name="Faust S."/>
            <person name="Peuker A."/>
            <person name="Buettner R."/>
            <person name="Andreesen R."/>
            <person name="Kreutz M."/>
        </authorList>
    </citation>
    <scope>NUCLEOTIDE SEQUENCE [MRNA] (ISOFORM B)</scope>
    <scope>VARIANT SER-4</scope>
    <source>
        <tissue>Lymph node</tissue>
    </source>
</reference>
<reference key="3">
    <citation type="journal article" date="2001" name="Biochem. Biophys. Res. Commun.">
        <title>Expression and enzymatic activity of human disintegrin and metalloproteinase ADAM19/meltrin beta.</title>
        <authorList>
            <person name="Wei P."/>
            <person name="Zhao Y.-G."/>
            <person name="Zhuang L."/>
            <person name="Ruben S."/>
            <person name="Sang Q.-X.A."/>
        </authorList>
    </citation>
    <scope>NUCLEOTIDE SEQUENCE [MRNA] (ISOFORM B)</scope>
    <source>
        <tissue>Dendritic cell</tissue>
    </source>
</reference>
<reference key="4">
    <citation type="journal article" date="2004" name="Nature">
        <title>The DNA sequence and comparative analysis of human chromosome 5.</title>
        <authorList>
            <person name="Schmutz J."/>
            <person name="Martin J."/>
            <person name="Terry A."/>
            <person name="Couronne O."/>
            <person name="Grimwood J."/>
            <person name="Lowry S."/>
            <person name="Gordon L.A."/>
            <person name="Scott D."/>
            <person name="Xie G."/>
            <person name="Huang W."/>
            <person name="Hellsten U."/>
            <person name="Tran-Gyamfi M."/>
            <person name="She X."/>
            <person name="Prabhakar S."/>
            <person name="Aerts A."/>
            <person name="Altherr M."/>
            <person name="Bajorek E."/>
            <person name="Black S."/>
            <person name="Branscomb E."/>
            <person name="Caoile C."/>
            <person name="Challacombe J.F."/>
            <person name="Chan Y.M."/>
            <person name="Denys M."/>
            <person name="Detter J.C."/>
            <person name="Escobar J."/>
            <person name="Flowers D."/>
            <person name="Fotopulos D."/>
            <person name="Glavina T."/>
            <person name="Gomez M."/>
            <person name="Gonzales E."/>
            <person name="Goodstein D."/>
            <person name="Grigoriev I."/>
            <person name="Groza M."/>
            <person name="Hammon N."/>
            <person name="Hawkins T."/>
            <person name="Haydu L."/>
            <person name="Israni S."/>
            <person name="Jett J."/>
            <person name="Kadner K."/>
            <person name="Kimball H."/>
            <person name="Kobayashi A."/>
            <person name="Lopez F."/>
            <person name="Lou Y."/>
            <person name="Martinez D."/>
            <person name="Medina C."/>
            <person name="Morgan J."/>
            <person name="Nandkeshwar R."/>
            <person name="Noonan J.P."/>
            <person name="Pitluck S."/>
            <person name="Pollard M."/>
            <person name="Predki P."/>
            <person name="Priest J."/>
            <person name="Ramirez L."/>
            <person name="Retterer J."/>
            <person name="Rodriguez A."/>
            <person name="Rogers S."/>
            <person name="Salamov A."/>
            <person name="Salazar A."/>
            <person name="Thayer N."/>
            <person name="Tice H."/>
            <person name="Tsai M."/>
            <person name="Ustaszewska A."/>
            <person name="Vo N."/>
            <person name="Wheeler J."/>
            <person name="Wu K."/>
            <person name="Yang J."/>
            <person name="Dickson M."/>
            <person name="Cheng J.-F."/>
            <person name="Eichler E.E."/>
            <person name="Olsen A."/>
            <person name="Pennacchio L.A."/>
            <person name="Rokhsar D.S."/>
            <person name="Richardson P."/>
            <person name="Lucas S.M."/>
            <person name="Myers R.M."/>
            <person name="Rubin E.M."/>
        </authorList>
    </citation>
    <scope>NUCLEOTIDE SEQUENCE [LARGE SCALE GENOMIC DNA]</scope>
</reference>
<reference key="5">
    <citation type="submission" date="1999-03" db="EMBL/GenBank/DDBJ databases">
        <title>Partial sequence of Homo sapiens ADAM19.</title>
        <authorList>
            <person name="Xu R."/>
            <person name="Cai J."/>
            <person name="Ying B."/>
            <person name="Wang F."/>
            <person name="Xu T."/>
            <person name="Zhao S."/>
            <person name="Li C."/>
        </authorList>
    </citation>
    <scope>NUCLEOTIDE SEQUENCE [MRNA] OF 99-955 (ISOFORM A)</scope>
</reference>
<reference key="6">
    <citation type="journal article" date="2003" name="J. Biol. Chem.">
        <title>The adaptor protein fish associates with members of the ADAMs family and localizes to podosomes of Src-transformed cells.</title>
        <authorList>
            <person name="Abram C.L."/>
            <person name="Seals D.F."/>
            <person name="Pass I."/>
            <person name="Salinsky D."/>
            <person name="Maurer L."/>
            <person name="Roth T.M."/>
            <person name="Courtneidge S.A."/>
        </authorList>
    </citation>
    <scope>INTERACTION WITH SH3PXD2A</scope>
</reference>
<reference key="7">
    <citation type="journal article" date="2006" name="Science">
        <title>The consensus coding sequences of human breast and colorectal cancers.</title>
        <authorList>
            <person name="Sjoeblom T."/>
            <person name="Jones S."/>
            <person name="Wood L.D."/>
            <person name="Parsons D.W."/>
            <person name="Lin J."/>
            <person name="Barber T.D."/>
            <person name="Mandelker D."/>
            <person name="Leary R.J."/>
            <person name="Ptak J."/>
            <person name="Silliman N."/>
            <person name="Szabo S."/>
            <person name="Buckhaults P."/>
            <person name="Farrell C."/>
            <person name="Meeh P."/>
            <person name="Markowitz S.D."/>
            <person name="Willis J."/>
            <person name="Dawson D."/>
            <person name="Willson J.K.V."/>
            <person name="Gazdar A.F."/>
            <person name="Hartigan J."/>
            <person name="Wu L."/>
            <person name="Liu C."/>
            <person name="Parmigiani G."/>
            <person name="Park B.H."/>
            <person name="Bachman K.E."/>
            <person name="Papadopoulos N."/>
            <person name="Vogelstein B."/>
            <person name="Kinzler K.W."/>
            <person name="Velculescu V.E."/>
        </authorList>
    </citation>
    <scope>VARIANTS [LARGE SCALE ANALYSIS] GLN-133 AND THR-298</scope>
</reference>
<reference key="8">
    <citation type="journal article" date="2008" name="Science">
        <title>Core signaling pathways in human pancreatic cancers revealed by global genomic analyses.</title>
        <authorList>
            <person name="Jones S."/>
            <person name="Zhang X."/>
            <person name="Parsons D.W."/>
            <person name="Lin J.C."/>
            <person name="Leary R.J."/>
            <person name="Angenendt P."/>
            <person name="Mankoo P."/>
            <person name="Carter H."/>
            <person name="Kamiyama H."/>
            <person name="Jimeno A."/>
            <person name="Hong S.M."/>
            <person name="Fu B."/>
            <person name="Lin M.T."/>
            <person name="Calhoun E.S."/>
            <person name="Kamiyama M."/>
            <person name="Walter K."/>
            <person name="Nikolskaya T."/>
            <person name="Nikolsky Y."/>
            <person name="Hartigan J."/>
            <person name="Smith D.R."/>
            <person name="Hidalgo M."/>
            <person name="Leach S.D."/>
            <person name="Klein A.P."/>
            <person name="Jaffee E.M."/>
            <person name="Goggins M."/>
            <person name="Maitra A."/>
            <person name="Iacobuzio-Donahue C."/>
            <person name="Eshleman J.R."/>
            <person name="Kern S.E."/>
            <person name="Hruban R.H."/>
            <person name="Karchin R."/>
            <person name="Papadopoulos N."/>
            <person name="Parmigiani G."/>
            <person name="Vogelstein B."/>
            <person name="Velculescu V.E."/>
            <person name="Kinzler K.W."/>
        </authorList>
    </citation>
    <scope>VARIANT [LARGE SCALE ANALYSIS] GLN-609</scope>
</reference>
<protein>
    <recommendedName>
        <fullName>Disintegrin and metalloproteinase domain-containing protein 19</fullName>
        <shortName>ADAM 19</shortName>
        <ecNumber>3.4.24.-</ecNumber>
    </recommendedName>
    <alternativeName>
        <fullName>Meltrin-beta</fullName>
    </alternativeName>
    <alternativeName>
        <fullName>Metalloprotease and disintegrin dendritic antigen marker</fullName>
        <shortName>MADDAM</shortName>
    </alternativeName>
</protein>
<feature type="signal peptide" evidence="2">
    <location>
        <begin position="1"/>
        <end position="25"/>
    </location>
</feature>
<feature type="propeptide" id="PRO_0000029102" evidence="1">
    <location>
        <begin position="26"/>
        <end position="202"/>
    </location>
</feature>
<feature type="chain" id="PRO_0000029103" description="Disintegrin and metalloproteinase domain-containing protein 19">
    <location>
        <begin position="203"/>
        <end position="955"/>
    </location>
</feature>
<feature type="topological domain" description="Extracellular" evidence="2">
    <location>
        <begin position="203"/>
        <end position="699"/>
    </location>
</feature>
<feature type="transmembrane region" description="Helical" evidence="2">
    <location>
        <begin position="700"/>
        <end position="720"/>
    </location>
</feature>
<feature type="topological domain" description="Cytoplasmic" evidence="2">
    <location>
        <begin position="721"/>
        <end position="955"/>
    </location>
</feature>
<feature type="domain" description="Peptidase M12B" evidence="5">
    <location>
        <begin position="210"/>
        <end position="408"/>
    </location>
</feature>
<feature type="domain" description="Disintegrin" evidence="3">
    <location>
        <begin position="416"/>
        <end position="502"/>
    </location>
</feature>
<feature type="domain" description="EGF-like" evidence="4">
    <location>
        <begin position="650"/>
        <end position="682"/>
    </location>
</feature>
<feature type="region of interest" description="Disordered" evidence="7">
    <location>
        <begin position="753"/>
        <end position="917"/>
    </location>
</feature>
<feature type="short sequence motif" description="Cysteine switch" evidence="1">
    <location>
        <begin position="130"/>
        <end position="137"/>
    </location>
</feature>
<feature type="short sequence motif" description="SH3-binding" evidence="2">
    <location>
        <begin position="833"/>
        <end position="844"/>
    </location>
</feature>
<feature type="compositionally biased region" description="Polar residues" evidence="7">
    <location>
        <begin position="753"/>
        <end position="771"/>
    </location>
</feature>
<feature type="compositionally biased region" description="Pro residues" evidence="7">
    <location>
        <begin position="787"/>
        <end position="796"/>
    </location>
</feature>
<feature type="compositionally biased region" description="Pro residues" evidence="7">
    <location>
        <begin position="833"/>
        <end position="844"/>
    </location>
</feature>
<feature type="active site" evidence="5 6">
    <location>
        <position position="346"/>
    </location>
</feature>
<feature type="binding site" description="in inhibited form" evidence="1">
    <location>
        <position position="132"/>
    </location>
    <ligand>
        <name>Zn(2+)</name>
        <dbReference type="ChEBI" id="CHEBI:29105"/>
        <note>catalytic</note>
    </ligand>
</feature>
<feature type="binding site" evidence="1">
    <location>
        <position position="345"/>
    </location>
    <ligand>
        <name>Zn(2+)</name>
        <dbReference type="ChEBI" id="CHEBI:29105"/>
        <note>catalytic</note>
    </ligand>
</feature>
<feature type="binding site" evidence="1">
    <location>
        <position position="349"/>
    </location>
    <ligand>
        <name>Zn(2+)</name>
        <dbReference type="ChEBI" id="CHEBI:29105"/>
        <note>catalytic</note>
    </ligand>
</feature>
<feature type="binding site" evidence="1">
    <location>
        <position position="355"/>
    </location>
    <ligand>
        <name>Zn(2+)</name>
        <dbReference type="ChEBI" id="CHEBI:29105"/>
        <note>catalytic</note>
    </ligand>
</feature>
<feature type="glycosylation site" description="N-linked (GlcNAc...) asparagine" evidence="2">
    <location>
        <position position="144"/>
    </location>
</feature>
<feature type="glycosylation site" description="N-linked (GlcNAc...) asparagine" evidence="2">
    <location>
        <position position="444"/>
    </location>
</feature>
<feature type="glycosylation site" description="N-linked (GlcNAc...) asparagine" evidence="2">
    <location>
        <position position="447"/>
    </location>
</feature>
<feature type="glycosylation site" description="N-linked (GlcNAc...) asparagine" evidence="2">
    <location>
        <position position="645"/>
    </location>
</feature>
<feature type="disulfide bond" evidence="1">
    <location>
        <begin position="320"/>
        <end position="403"/>
    </location>
</feature>
<feature type="disulfide bond" evidence="1">
    <location>
        <begin position="360"/>
        <end position="387"/>
    </location>
</feature>
<feature type="disulfide bond" evidence="1">
    <location>
        <begin position="361"/>
        <end position="370"/>
    </location>
</feature>
<feature type="disulfide bond" evidence="1">
    <location>
        <begin position="474"/>
        <end position="494"/>
    </location>
</feature>
<feature type="disulfide bond" evidence="1">
    <location>
        <begin position="654"/>
        <end position="664"/>
    </location>
</feature>
<feature type="disulfide bond" evidence="1">
    <location>
        <begin position="658"/>
        <end position="670"/>
    </location>
</feature>
<feature type="disulfide bond" evidence="1">
    <location>
        <begin position="672"/>
        <end position="681"/>
    </location>
</feature>
<feature type="splice variant" id="VSP_005481" description="In isoform B." evidence="12 13">
    <original>VSPREALKVKAGTRGLQGGRCRVEKTKQFMLLVVWTELPEQKPRAKHSCFLVPA</original>
    <variation>FPEYRSQRAGGMISSKI</variation>
    <location>
        <begin position="902"/>
        <end position="955"/>
    </location>
</feature>
<feature type="sequence variant" id="VAR_057066" description="In dbSNP:rs11465228." evidence="8">
    <original>G</original>
    <variation>S</variation>
    <location>
        <position position="4"/>
    </location>
</feature>
<feature type="sequence variant" id="VAR_036146" description="In a colorectal cancer sample; somatic mutation; dbSNP:rs200894535." evidence="10">
    <original>R</original>
    <variation>Q</variation>
    <location>
        <position position="133"/>
    </location>
</feature>
<feature type="sequence variant" id="VAR_036147" description="In a colorectal cancer sample; somatic mutation; dbSNP:rs1178207005." evidence="10">
    <original>A</original>
    <variation>T</variation>
    <location>
        <position position="298"/>
    </location>
</feature>
<feature type="sequence variant" id="VAR_062670" description="In a pancreatic ductal adenocarcinoma sample; somatic mutation." evidence="11">
    <original>H</original>
    <variation>Q</variation>
    <location>
        <position position="609"/>
    </location>
</feature>
<feature type="sequence conflict" description="In Ref. 1; AAG50282." evidence="14" ref="1">
    <original>R</original>
    <variation>SK</variation>
    <location>
        <position position="32"/>
    </location>
</feature>
<feature type="sequence conflict" description="In Ref. 1; AAG50282 and 5; AAF22162." evidence="14" ref="1 5">
    <original>D</original>
    <variation>V</variation>
    <location>
        <position position="557"/>
    </location>
</feature>
<feature type="sequence conflict" description="In Ref. 1; AAG50282 and 5; AAF22162." evidence="14" ref="1 5">
    <original>D</original>
    <variation>N</variation>
    <location>
        <position position="622"/>
    </location>
</feature>
<name>ADA19_HUMAN</name>
<proteinExistence type="evidence at protein level"/>
<dbReference type="EC" id="3.4.24.-"/>
<dbReference type="EMBL" id="AF326918">
    <property type="protein sequence ID" value="AAG50282.1"/>
    <property type="molecule type" value="mRNA"/>
</dbReference>
<dbReference type="EMBL" id="Y13786">
    <property type="protein sequence ID" value="CAC20585.1"/>
    <property type="molecule type" value="mRNA"/>
</dbReference>
<dbReference type="EMBL" id="AF311317">
    <property type="protein sequence ID" value="AAK07852.1"/>
    <property type="molecule type" value="mRNA"/>
</dbReference>
<dbReference type="EMBL" id="AC008676">
    <property type="status" value="NOT_ANNOTATED_CDS"/>
    <property type="molecule type" value="Genomic_DNA"/>
</dbReference>
<dbReference type="EMBL" id="AC008694">
    <property type="status" value="NOT_ANNOTATED_CDS"/>
    <property type="molecule type" value="Genomic_DNA"/>
</dbReference>
<dbReference type="EMBL" id="AC106801">
    <property type="status" value="NOT_ANNOTATED_CDS"/>
    <property type="molecule type" value="Genomic_DNA"/>
</dbReference>
<dbReference type="EMBL" id="AF134707">
    <property type="protein sequence ID" value="AAF22162.1"/>
    <property type="molecule type" value="mRNA"/>
</dbReference>
<dbReference type="CCDS" id="CCDS4338.1">
    <molecule id="Q9H013-2"/>
</dbReference>
<dbReference type="RefSeq" id="NP_150377.1">
    <molecule id="Q9H013-2"/>
    <property type="nucleotide sequence ID" value="NM_033274.5"/>
</dbReference>
<dbReference type="RefSeq" id="XP_005266060.1">
    <property type="nucleotide sequence ID" value="XM_005266003.2"/>
</dbReference>
<dbReference type="RefSeq" id="XP_047273814.1">
    <molecule id="Q9H013-1"/>
    <property type="nucleotide sequence ID" value="XM_047417858.1"/>
</dbReference>
<dbReference type="RefSeq" id="XP_054209714.1">
    <molecule id="Q9H013-1"/>
    <property type="nucleotide sequence ID" value="XM_054353739.1"/>
</dbReference>
<dbReference type="SMR" id="Q9H013"/>
<dbReference type="BioGRID" id="114267">
    <property type="interactions" value="51"/>
</dbReference>
<dbReference type="FunCoup" id="Q9H013">
    <property type="interactions" value="775"/>
</dbReference>
<dbReference type="IntAct" id="Q9H013">
    <property type="interactions" value="43"/>
</dbReference>
<dbReference type="MINT" id="Q9H013"/>
<dbReference type="STRING" id="9606.ENSP00000257527"/>
<dbReference type="MEROPS" id="M12.214"/>
<dbReference type="GlyCosmos" id="Q9H013">
    <property type="glycosylation" value="4 sites, No reported glycans"/>
</dbReference>
<dbReference type="GlyGen" id="Q9H013">
    <property type="glycosylation" value="8 sites, 1 N-linked glycan (1 site), 1 O-linked glycan (4 sites)"/>
</dbReference>
<dbReference type="iPTMnet" id="Q9H013"/>
<dbReference type="PhosphoSitePlus" id="Q9H013"/>
<dbReference type="SwissPalm" id="Q9H013"/>
<dbReference type="BioMuta" id="ADAM19"/>
<dbReference type="DMDM" id="302393821"/>
<dbReference type="jPOST" id="Q9H013"/>
<dbReference type="MassIVE" id="Q9H013"/>
<dbReference type="PaxDb" id="9606-ENSP00000257527"/>
<dbReference type="PeptideAtlas" id="Q9H013"/>
<dbReference type="ProteomicsDB" id="80195">
    <molecule id="Q9H013-1"/>
</dbReference>
<dbReference type="ProteomicsDB" id="80196">
    <molecule id="Q9H013-2"/>
</dbReference>
<dbReference type="Antibodypedia" id="16547">
    <property type="antibodies" value="249 antibodies from 36 providers"/>
</dbReference>
<dbReference type="DNASU" id="8728"/>
<dbReference type="Ensembl" id="ENST00000257527.9">
    <molecule id="Q9H013-2"/>
    <property type="protein sequence ID" value="ENSP00000257527.5"/>
    <property type="gene ID" value="ENSG00000135074.16"/>
</dbReference>
<dbReference type="Ensembl" id="ENST00000517905.1">
    <molecule id="Q9H013-1"/>
    <property type="protein sequence ID" value="ENSP00000428654.1"/>
    <property type="gene ID" value="ENSG00000135074.16"/>
</dbReference>
<dbReference type="GeneID" id="8728"/>
<dbReference type="KEGG" id="hsa:8728"/>
<dbReference type="MANE-Select" id="ENST00000257527.9">
    <molecule id="Q9H013-2"/>
    <property type="protein sequence ID" value="ENSP00000257527.5"/>
    <property type="RefSeq nucleotide sequence ID" value="NM_033274.5"/>
    <property type="RefSeq protein sequence ID" value="NP_150377.1"/>
</dbReference>
<dbReference type="UCSC" id="uc003lwz.5">
    <molecule id="Q9H013-1"/>
    <property type="organism name" value="human"/>
</dbReference>
<dbReference type="AGR" id="HGNC:197"/>
<dbReference type="CTD" id="8728"/>
<dbReference type="DisGeNET" id="8728"/>
<dbReference type="GeneCards" id="ADAM19"/>
<dbReference type="HGNC" id="HGNC:197">
    <property type="gene designation" value="ADAM19"/>
</dbReference>
<dbReference type="HPA" id="ENSG00000135074">
    <property type="expression patterns" value="Low tissue specificity"/>
</dbReference>
<dbReference type="MIM" id="603640">
    <property type="type" value="gene"/>
</dbReference>
<dbReference type="neXtProt" id="NX_Q9H013"/>
<dbReference type="OpenTargets" id="ENSG00000135074"/>
<dbReference type="PharmGKB" id="PA24514"/>
<dbReference type="VEuPathDB" id="HostDB:ENSG00000135074"/>
<dbReference type="eggNOG" id="KOG3607">
    <property type="taxonomic scope" value="Eukaryota"/>
</dbReference>
<dbReference type="GeneTree" id="ENSGT00940000159624"/>
<dbReference type="HOGENOM" id="CLU_012714_7_0_1"/>
<dbReference type="InParanoid" id="Q9H013"/>
<dbReference type="OMA" id="HGVCCEN"/>
<dbReference type="OrthoDB" id="5951731at2759"/>
<dbReference type="PAN-GO" id="Q9H013">
    <property type="GO annotations" value="2 GO annotations based on evolutionary models"/>
</dbReference>
<dbReference type="PhylomeDB" id="Q9H013"/>
<dbReference type="TreeFam" id="TF314733"/>
<dbReference type="PathwayCommons" id="Q9H013"/>
<dbReference type="Reactome" id="R-HSA-8941237">
    <property type="pathway name" value="Invadopodia formation"/>
</dbReference>
<dbReference type="Reactome" id="R-HSA-9762292">
    <property type="pathway name" value="Regulation of CDH11 function"/>
</dbReference>
<dbReference type="SABIO-RK" id="Q9H013"/>
<dbReference type="SignaLink" id="Q9H013"/>
<dbReference type="SIGNOR" id="Q9H013"/>
<dbReference type="BioGRID-ORCS" id="8728">
    <property type="hits" value="9 hits in 1148 CRISPR screens"/>
</dbReference>
<dbReference type="ChiTaRS" id="ADAM19">
    <property type="organism name" value="human"/>
</dbReference>
<dbReference type="GeneWiki" id="ADAM19"/>
<dbReference type="GenomeRNAi" id="8728"/>
<dbReference type="Pharos" id="Q9H013">
    <property type="development level" value="Tbio"/>
</dbReference>
<dbReference type="PRO" id="PR:Q9H013"/>
<dbReference type="Proteomes" id="UP000005640">
    <property type="component" value="Chromosome 5"/>
</dbReference>
<dbReference type="RNAct" id="Q9H013">
    <property type="molecule type" value="protein"/>
</dbReference>
<dbReference type="Bgee" id="ENSG00000135074">
    <property type="expression patterns" value="Expressed in oocyte and 180 other cell types or tissues"/>
</dbReference>
<dbReference type="ExpressionAtlas" id="Q9H013">
    <property type="expression patterns" value="baseline and differential"/>
</dbReference>
<dbReference type="GO" id="GO:0062023">
    <property type="term" value="C:collagen-containing extracellular matrix"/>
    <property type="evidence" value="ECO:0007005"/>
    <property type="project" value="BHF-UCL"/>
</dbReference>
<dbReference type="GO" id="GO:0005634">
    <property type="term" value="C:nucleus"/>
    <property type="evidence" value="ECO:0000314"/>
    <property type="project" value="UniProtKB"/>
</dbReference>
<dbReference type="GO" id="GO:0005886">
    <property type="term" value="C:plasma membrane"/>
    <property type="evidence" value="ECO:0000304"/>
    <property type="project" value="Reactome"/>
</dbReference>
<dbReference type="GO" id="GO:0046872">
    <property type="term" value="F:metal ion binding"/>
    <property type="evidence" value="ECO:0007669"/>
    <property type="project" value="UniProtKB-KW"/>
</dbReference>
<dbReference type="GO" id="GO:0004222">
    <property type="term" value="F:metalloendopeptidase activity"/>
    <property type="evidence" value="ECO:0000315"/>
    <property type="project" value="UniProtKB"/>
</dbReference>
<dbReference type="GO" id="GO:1902945">
    <property type="term" value="F:metalloendopeptidase activity involved in amyloid precursor protein catabolic process"/>
    <property type="evidence" value="ECO:0000315"/>
    <property type="project" value="ARUK-UCL"/>
</dbReference>
<dbReference type="GO" id="GO:0017124">
    <property type="term" value="F:SH3 domain binding"/>
    <property type="evidence" value="ECO:0007669"/>
    <property type="project" value="UniProtKB-KW"/>
</dbReference>
<dbReference type="GO" id="GO:0042987">
    <property type="term" value="P:amyloid precursor protein catabolic process"/>
    <property type="evidence" value="ECO:0000315"/>
    <property type="project" value="ARUK-UCL"/>
</dbReference>
<dbReference type="GO" id="GO:0006509">
    <property type="term" value="P:membrane protein ectodomain proteolysis"/>
    <property type="evidence" value="ECO:0000318"/>
    <property type="project" value="GO_Central"/>
</dbReference>
<dbReference type="GO" id="GO:0001890">
    <property type="term" value="P:placenta development"/>
    <property type="evidence" value="ECO:0000270"/>
    <property type="project" value="UniProtKB"/>
</dbReference>
<dbReference type="GO" id="GO:2000049">
    <property type="term" value="P:positive regulation of cell-cell adhesion mediated by cadherin"/>
    <property type="evidence" value="ECO:0000314"/>
    <property type="project" value="UniProtKB"/>
</dbReference>
<dbReference type="GO" id="GO:0010628">
    <property type="term" value="P:positive regulation of gene expression"/>
    <property type="evidence" value="ECO:0000314"/>
    <property type="project" value="UniProtKB"/>
</dbReference>
<dbReference type="GO" id="GO:0016485">
    <property type="term" value="P:protein processing"/>
    <property type="evidence" value="ECO:0000315"/>
    <property type="project" value="ARUK-UCL"/>
</dbReference>
<dbReference type="CDD" id="cd04269">
    <property type="entry name" value="ZnMc_adamalysin_II_like"/>
    <property type="match status" value="1"/>
</dbReference>
<dbReference type="FunFam" id="3.40.390.10:FF:000002">
    <property type="entry name" value="Disintegrin and metalloproteinase domain-containing protein 22"/>
    <property type="match status" value="1"/>
</dbReference>
<dbReference type="FunFam" id="4.10.70.10:FF:000001">
    <property type="entry name" value="Disintegrin and metalloproteinase domain-containing protein 22"/>
    <property type="match status" value="1"/>
</dbReference>
<dbReference type="Gene3D" id="3.40.390.10">
    <property type="entry name" value="Collagenase (Catalytic Domain)"/>
    <property type="match status" value="1"/>
</dbReference>
<dbReference type="Gene3D" id="4.10.70.10">
    <property type="entry name" value="Disintegrin domain"/>
    <property type="match status" value="1"/>
</dbReference>
<dbReference type="InterPro" id="IPR006586">
    <property type="entry name" value="ADAM_Cys-rich"/>
</dbReference>
<dbReference type="InterPro" id="IPR018358">
    <property type="entry name" value="Disintegrin_CS"/>
</dbReference>
<dbReference type="InterPro" id="IPR001762">
    <property type="entry name" value="Disintegrin_dom"/>
</dbReference>
<dbReference type="InterPro" id="IPR036436">
    <property type="entry name" value="Disintegrin_dom_sf"/>
</dbReference>
<dbReference type="InterPro" id="IPR000742">
    <property type="entry name" value="EGF-like_dom"/>
</dbReference>
<dbReference type="InterPro" id="IPR024079">
    <property type="entry name" value="MetalloPept_cat_dom_sf"/>
</dbReference>
<dbReference type="InterPro" id="IPR001590">
    <property type="entry name" value="Peptidase_M12B"/>
</dbReference>
<dbReference type="InterPro" id="IPR002870">
    <property type="entry name" value="Peptidase_M12B_N"/>
</dbReference>
<dbReference type="InterPro" id="IPR034027">
    <property type="entry name" value="Reprolysin_adamalysin"/>
</dbReference>
<dbReference type="PANTHER" id="PTHR11905">
    <property type="entry name" value="ADAM A DISINTEGRIN AND METALLOPROTEASE DOMAIN"/>
    <property type="match status" value="1"/>
</dbReference>
<dbReference type="PANTHER" id="PTHR11905:SF19">
    <property type="entry name" value="DISINTEGRIN AND METALLOPROTEINASE DOMAIN-CONTAINING PROTEIN 19"/>
    <property type="match status" value="1"/>
</dbReference>
<dbReference type="Pfam" id="PF08516">
    <property type="entry name" value="ADAM_CR"/>
    <property type="match status" value="1"/>
</dbReference>
<dbReference type="Pfam" id="PF00200">
    <property type="entry name" value="Disintegrin"/>
    <property type="match status" value="1"/>
</dbReference>
<dbReference type="Pfam" id="PF01562">
    <property type="entry name" value="Pep_M12B_propep"/>
    <property type="match status" value="1"/>
</dbReference>
<dbReference type="Pfam" id="PF01421">
    <property type="entry name" value="Reprolysin"/>
    <property type="match status" value="1"/>
</dbReference>
<dbReference type="PRINTS" id="PR00289">
    <property type="entry name" value="DISINTEGRIN"/>
</dbReference>
<dbReference type="SMART" id="SM00608">
    <property type="entry name" value="ACR"/>
    <property type="match status" value="1"/>
</dbReference>
<dbReference type="SMART" id="SM00050">
    <property type="entry name" value="DISIN"/>
    <property type="match status" value="1"/>
</dbReference>
<dbReference type="SUPFAM" id="SSF57552">
    <property type="entry name" value="Blood coagulation inhibitor (disintegrin)"/>
    <property type="match status" value="1"/>
</dbReference>
<dbReference type="SUPFAM" id="SSF55486">
    <property type="entry name" value="Metalloproteases ('zincins'), catalytic domain"/>
    <property type="match status" value="1"/>
</dbReference>
<dbReference type="PROSITE" id="PS50215">
    <property type="entry name" value="ADAM_MEPRO"/>
    <property type="match status" value="1"/>
</dbReference>
<dbReference type="PROSITE" id="PS00427">
    <property type="entry name" value="DISINTEGRIN_1"/>
    <property type="match status" value="1"/>
</dbReference>
<dbReference type="PROSITE" id="PS50214">
    <property type="entry name" value="DISINTEGRIN_2"/>
    <property type="match status" value="1"/>
</dbReference>
<dbReference type="PROSITE" id="PS01186">
    <property type="entry name" value="EGF_2"/>
    <property type="match status" value="1"/>
</dbReference>
<dbReference type="PROSITE" id="PS50026">
    <property type="entry name" value="EGF_3"/>
    <property type="match status" value="1"/>
</dbReference>
<dbReference type="PROSITE" id="PS00142">
    <property type="entry name" value="ZINC_PROTEASE"/>
    <property type="match status" value="1"/>
</dbReference>
<keyword id="KW-0025">Alternative splicing</keyword>
<keyword id="KW-1015">Disulfide bond</keyword>
<keyword id="KW-0245">EGF-like domain</keyword>
<keyword id="KW-0325">Glycoprotein</keyword>
<keyword id="KW-0378">Hydrolase</keyword>
<keyword id="KW-0472">Membrane</keyword>
<keyword id="KW-0479">Metal-binding</keyword>
<keyword id="KW-0482">Metalloprotease</keyword>
<keyword id="KW-0645">Protease</keyword>
<keyword id="KW-1267">Proteomics identification</keyword>
<keyword id="KW-1185">Reference proteome</keyword>
<keyword id="KW-0729">SH3-binding</keyword>
<keyword id="KW-0732">Signal</keyword>
<keyword id="KW-0812">Transmembrane</keyword>
<keyword id="KW-1133">Transmembrane helix</keyword>
<keyword id="KW-0862">Zinc</keyword>
<keyword id="KW-0865">Zymogen</keyword>
<gene>
    <name type="primary">ADAM19</name>
    <name type="synonym">MLTNB</name>
    <name type="ORF">FKSG34</name>
</gene>